<reference key="1">
    <citation type="submission" date="2005-08" db="EMBL/GenBank/DDBJ databases">
        <title>Complete sequence of Chlorobium chlorochromatii CaD3.</title>
        <authorList>
            <consortium name="US DOE Joint Genome Institute"/>
            <person name="Copeland A."/>
            <person name="Lucas S."/>
            <person name="Lapidus A."/>
            <person name="Barry K."/>
            <person name="Detter J.C."/>
            <person name="Glavina T."/>
            <person name="Hammon N."/>
            <person name="Israni S."/>
            <person name="Pitluck S."/>
            <person name="Bryant D."/>
            <person name="Schmutz J."/>
            <person name="Larimer F."/>
            <person name="Land M."/>
            <person name="Kyrpides N."/>
            <person name="Ivanova N."/>
            <person name="Richardson P."/>
        </authorList>
    </citation>
    <scope>NUCLEOTIDE SEQUENCE [LARGE SCALE GENOMIC DNA]</scope>
    <source>
        <strain>CaD3</strain>
    </source>
</reference>
<feature type="chain" id="PRO_0000250111" description="3-isopropylmalate dehydrogenase">
    <location>
        <begin position="1"/>
        <end position="352"/>
    </location>
</feature>
<feature type="binding site" evidence="1">
    <location>
        <begin position="76"/>
        <end position="89"/>
    </location>
    <ligand>
        <name>NAD(+)</name>
        <dbReference type="ChEBI" id="CHEBI:57540"/>
    </ligand>
</feature>
<feature type="binding site" evidence="1">
    <location>
        <position position="96"/>
    </location>
    <ligand>
        <name>substrate</name>
    </ligand>
</feature>
<feature type="binding site" evidence="1">
    <location>
        <position position="106"/>
    </location>
    <ligand>
        <name>substrate</name>
    </ligand>
</feature>
<feature type="binding site" evidence="1">
    <location>
        <position position="134"/>
    </location>
    <ligand>
        <name>substrate</name>
    </ligand>
</feature>
<feature type="binding site" evidence="1">
    <location>
        <position position="219"/>
    </location>
    <ligand>
        <name>Mg(2+)</name>
        <dbReference type="ChEBI" id="CHEBI:18420"/>
    </ligand>
</feature>
<feature type="binding site" evidence="1">
    <location>
        <position position="219"/>
    </location>
    <ligand>
        <name>substrate</name>
    </ligand>
</feature>
<feature type="binding site" evidence="1">
    <location>
        <position position="243"/>
    </location>
    <ligand>
        <name>Mg(2+)</name>
        <dbReference type="ChEBI" id="CHEBI:18420"/>
    </ligand>
</feature>
<feature type="binding site" evidence="1">
    <location>
        <position position="247"/>
    </location>
    <ligand>
        <name>Mg(2+)</name>
        <dbReference type="ChEBI" id="CHEBI:18420"/>
    </ligand>
</feature>
<feature type="binding site" evidence="1">
    <location>
        <begin position="276"/>
        <end position="288"/>
    </location>
    <ligand>
        <name>NAD(+)</name>
        <dbReference type="ChEBI" id="CHEBI:57540"/>
    </ligand>
</feature>
<feature type="site" description="Important for catalysis" evidence="1">
    <location>
        <position position="141"/>
    </location>
</feature>
<feature type="site" description="Important for catalysis" evidence="1">
    <location>
        <position position="187"/>
    </location>
</feature>
<name>LEU3_CHLCH</name>
<keyword id="KW-0028">Amino-acid biosynthesis</keyword>
<keyword id="KW-0100">Branched-chain amino acid biosynthesis</keyword>
<keyword id="KW-0963">Cytoplasm</keyword>
<keyword id="KW-0432">Leucine biosynthesis</keyword>
<keyword id="KW-0460">Magnesium</keyword>
<keyword id="KW-0464">Manganese</keyword>
<keyword id="KW-0479">Metal-binding</keyword>
<keyword id="KW-0520">NAD</keyword>
<keyword id="KW-0560">Oxidoreductase</keyword>
<organism>
    <name type="scientific">Chlorobium chlorochromatii (strain CaD3)</name>
    <dbReference type="NCBI Taxonomy" id="340177"/>
    <lineage>
        <taxon>Bacteria</taxon>
        <taxon>Pseudomonadati</taxon>
        <taxon>Chlorobiota</taxon>
        <taxon>Chlorobiia</taxon>
        <taxon>Chlorobiales</taxon>
        <taxon>Chlorobiaceae</taxon>
        <taxon>Chlorobium/Pelodictyon group</taxon>
        <taxon>Chlorobium</taxon>
    </lineage>
</organism>
<protein>
    <recommendedName>
        <fullName evidence="1">3-isopropylmalate dehydrogenase</fullName>
        <ecNumber evidence="1">1.1.1.85</ecNumber>
    </recommendedName>
    <alternativeName>
        <fullName evidence="1">3-IPM-DH</fullName>
    </alternativeName>
    <alternativeName>
        <fullName evidence="1">Beta-IPM dehydrogenase</fullName>
        <shortName evidence="1">IMDH</shortName>
    </alternativeName>
</protein>
<accession>Q3APC4</accession>
<comment type="function">
    <text evidence="1">Catalyzes the oxidation of 3-carboxy-2-hydroxy-4-methylpentanoate (3-isopropylmalate) to 3-carboxy-4-methyl-2-oxopentanoate. The product decarboxylates to 4-methyl-2 oxopentanoate.</text>
</comment>
<comment type="catalytic activity">
    <reaction evidence="1">
        <text>(2R,3S)-3-isopropylmalate + NAD(+) = 4-methyl-2-oxopentanoate + CO2 + NADH</text>
        <dbReference type="Rhea" id="RHEA:32271"/>
        <dbReference type="ChEBI" id="CHEBI:16526"/>
        <dbReference type="ChEBI" id="CHEBI:17865"/>
        <dbReference type="ChEBI" id="CHEBI:35121"/>
        <dbReference type="ChEBI" id="CHEBI:57540"/>
        <dbReference type="ChEBI" id="CHEBI:57945"/>
        <dbReference type="EC" id="1.1.1.85"/>
    </reaction>
</comment>
<comment type="cofactor">
    <cofactor evidence="1">
        <name>Mg(2+)</name>
        <dbReference type="ChEBI" id="CHEBI:18420"/>
    </cofactor>
    <cofactor evidence="1">
        <name>Mn(2+)</name>
        <dbReference type="ChEBI" id="CHEBI:29035"/>
    </cofactor>
    <text evidence="1">Binds 1 Mg(2+) or Mn(2+) ion per subunit.</text>
</comment>
<comment type="pathway">
    <text evidence="1">Amino-acid biosynthesis; L-leucine biosynthesis; L-leucine from 3-methyl-2-oxobutanoate: step 3/4.</text>
</comment>
<comment type="subunit">
    <text evidence="1">Homodimer.</text>
</comment>
<comment type="subcellular location">
    <subcellularLocation>
        <location evidence="1">Cytoplasm</location>
    </subcellularLocation>
</comment>
<comment type="similarity">
    <text evidence="1">Belongs to the isocitrate and isopropylmalate dehydrogenases family. LeuB type 1 subfamily.</text>
</comment>
<proteinExistence type="inferred from homology"/>
<gene>
    <name evidence="1" type="primary">leuB</name>
    <name type="ordered locus">Cag_1901</name>
</gene>
<evidence type="ECO:0000255" key="1">
    <source>
        <dbReference type="HAMAP-Rule" id="MF_01033"/>
    </source>
</evidence>
<dbReference type="EC" id="1.1.1.85" evidence="1"/>
<dbReference type="EMBL" id="CP000108">
    <property type="protein sequence ID" value="ABB29151.1"/>
    <property type="molecule type" value="Genomic_DNA"/>
</dbReference>
<dbReference type="SMR" id="Q3APC4"/>
<dbReference type="STRING" id="340177.Cag_1901"/>
<dbReference type="KEGG" id="cch:Cag_1901"/>
<dbReference type="eggNOG" id="COG0473">
    <property type="taxonomic scope" value="Bacteria"/>
</dbReference>
<dbReference type="HOGENOM" id="CLU_031953_0_3_10"/>
<dbReference type="OrthoDB" id="9806254at2"/>
<dbReference type="UniPathway" id="UPA00048">
    <property type="reaction ID" value="UER00072"/>
</dbReference>
<dbReference type="GO" id="GO:0005829">
    <property type="term" value="C:cytosol"/>
    <property type="evidence" value="ECO:0007669"/>
    <property type="project" value="TreeGrafter"/>
</dbReference>
<dbReference type="GO" id="GO:0003862">
    <property type="term" value="F:3-isopropylmalate dehydrogenase activity"/>
    <property type="evidence" value="ECO:0007669"/>
    <property type="project" value="UniProtKB-UniRule"/>
</dbReference>
<dbReference type="GO" id="GO:0000287">
    <property type="term" value="F:magnesium ion binding"/>
    <property type="evidence" value="ECO:0007669"/>
    <property type="project" value="InterPro"/>
</dbReference>
<dbReference type="GO" id="GO:0051287">
    <property type="term" value="F:NAD binding"/>
    <property type="evidence" value="ECO:0007669"/>
    <property type="project" value="InterPro"/>
</dbReference>
<dbReference type="GO" id="GO:0009098">
    <property type="term" value="P:L-leucine biosynthetic process"/>
    <property type="evidence" value="ECO:0007669"/>
    <property type="project" value="UniProtKB-UniRule"/>
</dbReference>
<dbReference type="FunFam" id="3.40.718.10:FF:000006">
    <property type="entry name" value="3-isopropylmalate dehydrogenase"/>
    <property type="match status" value="1"/>
</dbReference>
<dbReference type="Gene3D" id="3.40.718.10">
    <property type="entry name" value="Isopropylmalate Dehydrogenase"/>
    <property type="match status" value="1"/>
</dbReference>
<dbReference type="HAMAP" id="MF_01033">
    <property type="entry name" value="LeuB_type1"/>
    <property type="match status" value="1"/>
</dbReference>
<dbReference type="InterPro" id="IPR019818">
    <property type="entry name" value="IsoCit/isopropylmalate_DH_CS"/>
</dbReference>
<dbReference type="InterPro" id="IPR024084">
    <property type="entry name" value="IsoPropMal-DH-like_dom"/>
</dbReference>
<dbReference type="InterPro" id="IPR004429">
    <property type="entry name" value="Isopropylmalate_DH"/>
</dbReference>
<dbReference type="NCBIfam" id="TIGR00169">
    <property type="entry name" value="leuB"/>
    <property type="match status" value="1"/>
</dbReference>
<dbReference type="PANTHER" id="PTHR42979">
    <property type="entry name" value="3-ISOPROPYLMALATE DEHYDROGENASE"/>
    <property type="match status" value="1"/>
</dbReference>
<dbReference type="PANTHER" id="PTHR42979:SF1">
    <property type="entry name" value="3-ISOPROPYLMALATE DEHYDROGENASE"/>
    <property type="match status" value="1"/>
</dbReference>
<dbReference type="Pfam" id="PF00180">
    <property type="entry name" value="Iso_dh"/>
    <property type="match status" value="1"/>
</dbReference>
<dbReference type="SMART" id="SM01329">
    <property type="entry name" value="Iso_dh"/>
    <property type="match status" value="1"/>
</dbReference>
<dbReference type="SUPFAM" id="SSF53659">
    <property type="entry name" value="Isocitrate/Isopropylmalate dehydrogenase-like"/>
    <property type="match status" value="1"/>
</dbReference>
<dbReference type="PROSITE" id="PS00470">
    <property type="entry name" value="IDH_IMDH"/>
    <property type="match status" value="1"/>
</dbReference>
<sequence length="352" mass="38185">MNYKIVSIPGDGIGTEVVAGAVAVLRQLEKKYGFTVEIEEHLFGGASYDVHGEMLTDATLEACKNCDAVLLGAVGGPKWENLPHEHKPEAALLKIRKELGLFANLRPAKVYDALVDASSLKADVVRGTDFVVFRELTGGIYFGQPRGYDENKGWNTMVYEKYEVERIARLAFEAARQRQGRVMSIDKANVLEVSQLWRNVVHAVHADYQDVELSDMYVDNAAMQIVRNPKQFDVIVTGNLFGDILSDISGMITGSLGMLPSASIGSKHALYEPIHGSAPDIAGQNKANPIATIASVAMMFEHSFKRTDIARDIEQAIEAALATGVRTADIAAAGDTAVSTTAMTEAIISQLK</sequence>